<comment type="function">
    <text evidence="2 3 4">Mitochondrial inner membrane carrier protein that mediates the import of NAD(+) into mitochondria (PubMed:16291748, PubMed:32906142, PubMed:33087354). Can transport NAD(+) by unidirectional transport or by exchange with intramitochondrially generated dAMP and dGMP (PubMed:16291748). Also able to transport NAD(+) by exchange with AMP, GMP or deamido-NAD (+) in vitro (PubMed:16291748).</text>
</comment>
<comment type="catalytic activity">
    <reaction evidence="2">
        <text>dAMP(in) + NAD(+)(out) = dAMP(out) + NAD(+)(in)</text>
        <dbReference type="Rhea" id="RHEA:65412"/>
        <dbReference type="ChEBI" id="CHEBI:57540"/>
        <dbReference type="ChEBI" id="CHEBI:58245"/>
    </reaction>
    <physiologicalReaction direction="left-to-right" evidence="9">
        <dbReference type="Rhea" id="RHEA:65413"/>
    </physiologicalReaction>
</comment>
<comment type="catalytic activity">
    <reaction evidence="2">
        <text>dGMP(in) + NAD(+)(out) = dGMP(out) + NAD(+)(in)</text>
        <dbReference type="Rhea" id="RHEA:65416"/>
        <dbReference type="ChEBI" id="CHEBI:57540"/>
        <dbReference type="ChEBI" id="CHEBI:57673"/>
    </reaction>
    <physiologicalReaction direction="left-to-right" evidence="9">
        <dbReference type="Rhea" id="RHEA:65417"/>
    </physiologicalReaction>
</comment>
<comment type="catalytic activity">
    <reaction evidence="2">
        <text>GMP(in) + NAD(+)(out) = GMP(out) + NAD(+)(in)</text>
        <dbReference type="Rhea" id="RHEA:65420"/>
        <dbReference type="ChEBI" id="CHEBI:57540"/>
        <dbReference type="ChEBI" id="CHEBI:58115"/>
    </reaction>
    <physiologicalReaction direction="left-to-right" evidence="9">
        <dbReference type="Rhea" id="RHEA:65421"/>
    </physiologicalReaction>
</comment>
<comment type="catalytic activity">
    <reaction evidence="2">
        <text>AMP(in) + NAD(+)(out) = AMP(out) + NAD(+)(in)</text>
        <dbReference type="Rhea" id="RHEA:65424"/>
        <dbReference type="ChEBI" id="CHEBI:57540"/>
        <dbReference type="ChEBI" id="CHEBI:456215"/>
    </reaction>
    <physiologicalReaction direction="left-to-right" evidence="9">
        <dbReference type="Rhea" id="RHEA:65425"/>
    </physiologicalReaction>
</comment>
<comment type="catalytic activity">
    <reaction evidence="2">
        <text>deamido-NAD(+)(in) + NAD(+)(out) = deamido-NAD(+)(out) + NAD(+)(in)</text>
        <dbReference type="Rhea" id="RHEA:65428"/>
        <dbReference type="ChEBI" id="CHEBI:57540"/>
        <dbReference type="ChEBI" id="CHEBI:58437"/>
    </reaction>
    <physiologicalReaction direction="left-to-right" evidence="9">
        <dbReference type="Rhea" id="RHEA:65429"/>
    </physiologicalReaction>
</comment>
<comment type="biophysicochemical properties">
    <kinetics>
        <KM evidence="2">0.38 mM for NAD(+)</KM>
        <Vmax evidence="2">617.0 nmol/min/mg enzyme</Vmax>
    </kinetics>
</comment>
<comment type="subcellular location">
    <subcellularLocation>
        <location evidence="2">Mitochondrion inner membrane</location>
        <topology evidence="2">Multi-pass membrane protein</topology>
    </subcellularLocation>
</comment>
<comment type="similarity">
    <text evidence="7">Belongs to the mitochondrial carrier (TC 2.A.29) family.</text>
</comment>
<comment type="caution">
    <text evidence="8 9">Was first identified as the mitochondrial pyruvate transporter (PubMed:12887330). However, later experiments showed that was a NAD(+) transporter (PubMed:16291748).</text>
</comment>
<accession>P40556</accession>
<accession>D6VVS4</accession>
<sequence>MTQTDNPVPNCGLLPEQQYCSADHEEPLLLHEEQLIFPDHSSQLSSADIIEPIKMNSSTESIIGTTLRKKWVPLSSTQITALSGAFAGFLSGVAVCPLDVAKTRLQAQGLQTRFENPYYRGIMGTLSTIVRDEGPRGLYKGLVPIVLGYFPTWMIYFSVYEFSKKFFHGIFPQFDFVAQSCAAITAGAASTTLTNPIWVVKTRLMLQSNLGEHPTHYKGTFDAFRKLFYQEGFKALYAGLVPSLLGLFHVAIHFPIYEDLKVRFHCYSRENNTNSINLQRLIMASSVSKMIASAVTYPHEILRTRMQLKSDIPDSIQRRLFPLIKATYAQEGLKGFYSGFTTNLVRTIPASAITLVSFEYFRNRLENISTMVI</sequence>
<protein>
    <recommendedName>
        <fullName evidence="7">Mitochondrial nicotinamide adenine dinucleotide transporter 1</fullName>
    </recommendedName>
    <alternativeName>
        <fullName>Mitochondrial NAD(+) transporter 1</fullName>
    </alternativeName>
</protein>
<reference key="1">
    <citation type="journal article" date="1997" name="Nature">
        <title>The nucleotide sequence of Saccharomyces cerevisiae chromosome IX.</title>
        <authorList>
            <person name="Churcher C.M."/>
            <person name="Bowman S."/>
            <person name="Badcock K."/>
            <person name="Bankier A.T."/>
            <person name="Brown D."/>
            <person name="Chillingworth T."/>
            <person name="Connor R."/>
            <person name="Devlin K."/>
            <person name="Gentles S."/>
            <person name="Hamlin N."/>
            <person name="Harris D.E."/>
            <person name="Horsnell T."/>
            <person name="Hunt S."/>
            <person name="Jagels K."/>
            <person name="Jones M."/>
            <person name="Lye G."/>
            <person name="Moule S."/>
            <person name="Odell C."/>
            <person name="Pearson D."/>
            <person name="Rajandream M.A."/>
            <person name="Rice P."/>
            <person name="Rowley N."/>
            <person name="Skelton J."/>
            <person name="Smith V."/>
            <person name="Walsh S.V."/>
            <person name="Whitehead S."/>
            <person name="Barrell B.G."/>
        </authorList>
    </citation>
    <scope>NUCLEOTIDE SEQUENCE [LARGE SCALE GENOMIC DNA]</scope>
    <source>
        <strain>ATCC 204508 / S288c</strain>
    </source>
</reference>
<reference key="2">
    <citation type="journal article" date="2014" name="G3 (Bethesda)">
        <title>The reference genome sequence of Saccharomyces cerevisiae: Then and now.</title>
        <authorList>
            <person name="Engel S.R."/>
            <person name="Dietrich F.S."/>
            <person name="Fisk D.G."/>
            <person name="Binkley G."/>
            <person name="Balakrishnan R."/>
            <person name="Costanzo M.C."/>
            <person name="Dwight S.S."/>
            <person name="Hitz B.C."/>
            <person name="Karra K."/>
            <person name="Nash R.S."/>
            <person name="Weng S."/>
            <person name="Wong E.D."/>
            <person name="Lloyd P."/>
            <person name="Skrzypek M.S."/>
            <person name="Miyasato S.R."/>
            <person name="Simison M."/>
            <person name="Cherry J.M."/>
        </authorList>
    </citation>
    <scope>GENOME REANNOTATION</scope>
    <source>
        <strain>ATCC 204508 / S288c</strain>
    </source>
</reference>
<reference key="3">
    <citation type="journal article" date="1997" name="Yeast">
        <title>Phylogenetic classification of the mitochondrial carrier family of Saccharomyces cerevisiae.</title>
        <authorList>
            <person name="el Moualij B."/>
            <person name="Duyckaerts C."/>
            <person name="Lamotte-Brasseur J."/>
            <person name="Sluse F.E."/>
        </authorList>
    </citation>
    <scope>IDENTIFICATION</scope>
</reference>
<reference key="4">
    <citation type="journal article" date="2003" name="Biochem. J.">
        <title>Identification of the mitochondrial pyruvate carrier in Saccharomyces cerevisiae.</title>
        <authorList>
            <person name="Hildyard J.C."/>
            <person name="Halestrap A.P."/>
        </authorList>
    </citation>
    <scope>CAUTION</scope>
</reference>
<reference key="5">
    <citation type="journal article" date="2006" name="J. Biol. Chem.">
        <title>Identification of the mitochondrial NAD+ transporter in Saccharomyces cerevisiae.</title>
        <authorList>
            <person name="Todisco S."/>
            <person name="Agrimi G."/>
            <person name="Castegna A."/>
            <person name="Palmieri F."/>
        </authorList>
    </citation>
    <scope>FUNCTION</scope>
    <scope>CATALYTIC ACTIVITY</scope>
    <scope>SUBCELLULAR LOCATION</scope>
    <scope>BIOPHYSICOCHEMICAL PROPERTIES</scope>
</reference>
<reference key="6">
    <citation type="journal article" date="2006" name="Proc. Natl. Acad. Sci. U.S.A.">
        <title>A global topology map of the Saccharomyces cerevisiae membrane proteome.</title>
        <authorList>
            <person name="Kim H."/>
            <person name="Melen K."/>
            <person name="Oesterberg M."/>
            <person name="von Heijne G."/>
        </authorList>
    </citation>
    <scope>TOPOLOGY [LARGE SCALE ANALYSIS]</scope>
    <source>
        <strain>ATCC 208353 / W303-1A</strain>
    </source>
</reference>
<reference key="7">
    <citation type="journal article" date="2020" name="Nature">
        <title>SLC25A51 is a mammalian mitochondrial NAD+ transporter.</title>
        <authorList>
            <person name="Luongo T.S."/>
            <person name="Eller J.M."/>
            <person name="Lu M.J."/>
            <person name="Niere M."/>
            <person name="Raith F."/>
            <person name="Perry C."/>
            <person name="Bornstein M.R."/>
            <person name="Oliphint P."/>
            <person name="Wang L."/>
            <person name="McReynolds M.R."/>
            <person name="Migaud M.E."/>
            <person name="Rabinowitz J.D."/>
            <person name="Johnson F.B."/>
            <person name="Johnsson K."/>
            <person name="Ziegler M."/>
            <person name="Cambronne X.A."/>
            <person name="Baur J.A."/>
        </authorList>
    </citation>
    <scope>FUNCTION</scope>
</reference>
<reference key="8">
    <citation type="journal article" date="2020" name="Sci. Adv.">
        <title>MCART1/SLC25A51 is required for mitochondrial NAD transport.</title>
        <authorList>
            <person name="Kory N."/>
            <person name="Uit de Bos J."/>
            <person name="van der Rijt S."/>
            <person name="Jankovic N."/>
            <person name="Guera M."/>
            <person name="Arp N."/>
            <person name="Pena I.A."/>
            <person name="Prakash G."/>
            <person name="Chan S.H."/>
            <person name="Kunchok T."/>
            <person name="Lewis C.A."/>
            <person name="Sabatini D.M."/>
        </authorList>
    </citation>
    <scope>FUNCTION</scope>
</reference>
<dbReference type="EMBL" id="Z38113">
    <property type="protein sequence ID" value="CAA86245.1"/>
    <property type="molecule type" value="Genomic_DNA"/>
</dbReference>
<dbReference type="EMBL" id="BK006942">
    <property type="protein sequence ID" value="DAA08540.1"/>
    <property type="molecule type" value="Genomic_DNA"/>
</dbReference>
<dbReference type="PIR" id="S48451">
    <property type="entry name" value="S48451"/>
</dbReference>
<dbReference type="RefSeq" id="NP_012260.1">
    <property type="nucleotide sequence ID" value="NM_001179356.1"/>
</dbReference>
<dbReference type="SMR" id="P40556"/>
<dbReference type="BioGRID" id="34986">
    <property type="interactions" value="141"/>
</dbReference>
<dbReference type="DIP" id="DIP-4960N"/>
<dbReference type="FunCoup" id="P40556">
    <property type="interactions" value="373"/>
</dbReference>
<dbReference type="IntAct" id="P40556">
    <property type="interactions" value="1"/>
</dbReference>
<dbReference type="STRING" id="4932.YIL006W"/>
<dbReference type="TCDB" id="2.A.29.10.5">
    <property type="family name" value="the mitochondrial carrier (mc) family"/>
</dbReference>
<dbReference type="PaxDb" id="4932-YIL006W"/>
<dbReference type="PeptideAtlas" id="P40556"/>
<dbReference type="EnsemblFungi" id="YIL006W_mRNA">
    <property type="protein sequence ID" value="YIL006W"/>
    <property type="gene ID" value="YIL006W"/>
</dbReference>
<dbReference type="GeneID" id="854811"/>
<dbReference type="KEGG" id="sce:YIL006W"/>
<dbReference type="AGR" id="SGD:S000001268"/>
<dbReference type="SGD" id="S000001268">
    <property type="gene designation" value="YIA6"/>
</dbReference>
<dbReference type="VEuPathDB" id="FungiDB:YIL006W"/>
<dbReference type="eggNOG" id="KOG0764">
    <property type="taxonomic scope" value="Eukaryota"/>
</dbReference>
<dbReference type="GeneTree" id="ENSGT00940000176809"/>
<dbReference type="HOGENOM" id="CLU_015166_6_1_1"/>
<dbReference type="InParanoid" id="P40556"/>
<dbReference type="OMA" id="AFYNGMG"/>
<dbReference type="OrthoDB" id="10266426at2759"/>
<dbReference type="BioCyc" id="YEAST:G3O-31285-MONOMER"/>
<dbReference type="SABIO-RK" id="P40556"/>
<dbReference type="BioGRID-ORCS" id="854811">
    <property type="hits" value="7 hits in 10 CRISPR screens"/>
</dbReference>
<dbReference type="PRO" id="PR:P40556"/>
<dbReference type="Proteomes" id="UP000002311">
    <property type="component" value="Chromosome IX"/>
</dbReference>
<dbReference type="RNAct" id="P40556">
    <property type="molecule type" value="protein"/>
</dbReference>
<dbReference type="GO" id="GO:0005743">
    <property type="term" value="C:mitochondrial inner membrane"/>
    <property type="evidence" value="ECO:0007669"/>
    <property type="project" value="UniProtKB-SubCell"/>
</dbReference>
<dbReference type="GO" id="GO:0005739">
    <property type="term" value="C:mitochondrion"/>
    <property type="evidence" value="ECO:0000314"/>
    <property type="project" value="SGD"/>
</dbReference>
<dbReference type="GO" id="GO:0051724">
    <property type="term" value="F:NAD transmembrane transporter activity"/>
    <property type="evidence" value="ECO:0000314"/>
    <property type="project" value="UniProtKB"/>
</dbReference>
<dbReference type="GO" id="GO:1990549">
    <property type="term" value="P:mitochondrial NAD transmembrane transport"/>
    <property type="evidence" value="ECO:0000314"/>
    <property type="project" value="UniProtKB"/>
</dbReference>
<dbReference type="GO" id="GO:0006850">
    <property type="term" value="P:mitochondrial pyruvate transmembrane transport"/>
    <property type="evidence" value="ECO:0000315"/>
    <property type="project" value="SGD"/>
</dbReference>
<dbReference type="GO" id="GO:0035352">
    <property type="term" value="P:NAD transmembrane transport"/>
    <property type="evidence" value="ECO:0000314"/>
    <property type="project" value="SGD"/>
</dbReference>
<dbReference type="FunFam" id="1.50.40.10:FF:000081">
    <property type="entry name" value="NAD+ transporter"/>
    <property type="match status" value="1"/>
</dbReference>
<dbReference type="FunFam" id="1.50.40.10:FF:000106">
    <property type="entry name" value="NAD+ transporter"/>
    <property type="match status" value="1"/>
</dbReference>
<dbReference type="Gene3D" id="1.50.40.10">
    <property type="entry name" value="Mitochondrial carrier domain"/>
    <property type="match status" value="2"/>
</dbReference>
<dbReference type="InterPro" id="IPR002067">
    <property type="entry name" value="Mit_carrier"/>
</dbReference>
<dbReference type="InterPro" id="IPR018108">
    <property type="entry name" value="Mitochondrial_sb/sol_carrier"/>
</dbReference>
<dbReference type="InterPro" id="IPR023395">
    <property type="entry name" value="Mt_carrier_dom_sf"/>
</dbReference>
<dbReference type="InterPro" id="IPR044712">
    <property type="entry name" value="SLC25A32-like"/>
</dbReference>
<dbReference type="PANTHER" id="PTHR45683">
    <property type="entry name" value="MITOCHONDRIAL NICOTINAMIDE ADENINE DINUCLEOTIDE TRANSPORTER 1-RELATED-RELATED"/>
    <property type="match status" value="1"/>
</dbReference>
<dbReference type="Pfam" id="PF00153">
    <property type="entry name" value="Mito_carr"/>
    <property type="match status" value="3"/>
</dbReference>
<dbReference type="PRINTS" id="PR00926">
    <property type="entry name" value="MITOCARRIER"/>
</dbReference>
<dbReference type="SUPFAM" id="SSF103506">
    <property type="entry name" value="Mitochondrial carrier"/>
    <property type="match status" value="1"/>
</dbReference>
<dbReference type="PROSITE" id="PS50920">
    <property type="entry name" value="SOLCAR"/>
    <property type="match status" value="3"/>
</dbReference>
<proteinExistence type="evidence at protein level"/>
<gene>
    <name type="primary">YIA6</name>
    <name evidence="5 6" type="synonym">NDT1</name>
    <name type="ordered locus">YIL006W</name>
</gene>
<keyword id="KW-0472">Membrane</keyword>
<keyword id="KW-0496">Mitochondrion</keyword>
<keyword id="KW-0999">Mitochondrion inner membrane</keyword>
<keyword id="KW-1185">Reference proteome</keyword>
<keyword id="KW-0677">Repeat</keyword>
<keyword id="KW-0812">Transmembrane</keyword>
<keyword id="KW-1133">Transmembrane helix</keyword>
<keyword id="KW-0813">Transport</keyword>
<evidence type="ECO:0000255" key="1"/>
<evidence type="ECO:0000269" key="2">
    <source>
    </source>
</evidence>
<evidence type="ECO:0000269" key="3">
    <source>
    </source>
</evidence>
<evidence type="ECO:0000269" key="4">
    <source>
    </source>
</evidence>
<evidence type="ECO:0000303" key="5">
    <source>
    </source>
</evidence>
<evidence type="ECO:0000303" key="6">
    <source>
    </source>
</evidence>
<evidence type="ECO:0000305" key="7"/>
<evidence type="ECO:0000305" key="8">
    <source>
    </source>
</evidence>
<evidence type="ECO:0000305" key="9">
    <source>
    </source>
</evidence>
<organism>
    <name type="scientific">Saccharomyces cerevisiae (strain ATCC 204508 / S288c)</name>
    <name type="common">Baker's yeast</name>
    <dbReference type="NCBI Taxonomy" id="559292"/>
    <lineage>
        <taxon>Eukaryota</taxon>
        <taxon>Fungi</taxon>
        <taxon>Dikarya</taxon>
        <taxon>Ascomycota</taxon>
        <taxon>Saccharomycotina</taxon>
        <taxon>Saccharomycetes</taxon>
        <taxon>Saccharomycetales</taxon>
        <taxon>Saccharomycetaceae</taxon>
        <taxon>Saccharomyces</taxon>
    </lineage>
</organism>
<feature type="chain" id="PRO_0000090698" description="Mitochondrial nicotinamide adenine dinucleotide transporter 1">
    <location>
        <begin position="1"/>
        <end position="373"/>
    </location>
</feature>
<feature type="topological domain" description="Mitochondrial matrix" evidence="1">
    <location>
        <begin position="1"/>
        <end position="80"/>
    </location>
</feature>
<feature type="transmembrane region" description="Helical; Name=1" evidence="1">
    <location>
        <begin position="81"/>
        <end position="101"/>
    </location>
</feature>
<feature type="topological domain" description="Mitochondrial intermembrane" evidence="1">
    <location>
        <begin position="102"/>
        <end position="141"/>
    </location>
</feature>
<feature type="transmembrane region" description="Helical; Name=2" evidence="1">
    <location>
        <begin position="142"/>
        <end position="162"/>
    </location>
</feature>
<feature type="topological domain" description="Mitochondrial matrix" evidence="1">
    <location>
        <begin position="163"/>
        <end position="176"/>
    </location>
</feature>
<feature type="transmembrane region" description="Helical; Name=3" evidence="1">
    <location>
        <begin position="177"/>
        <end position="199"/>
    </location>
</feature>
<feature type="topological domain" description="Mitochondrial intermembrane" evidence="1">
    <location>
        <begin position="200"/>
        <end position="235"/>
    </location>
</feature>
<feature type="transmembrane region" description="Helical; Name=4" evidence="1">
    <location>
        <begin position="236"/>
        <end position="256"/>
    </location>
</feature>
<feature type="topological domain" description="Mitochondrial matrix" evidence="1">
    <location>
        <begin position="257"/>
        <end position="280"/>
    </location>
</feature>
<feature type="transmembrane region" description="Helical; Name=5" evidence="1">
    <location>
        <begin position="281"/>
        <end position="297"/>
    </location>
</feature>
<feature type="topological domain" description="Mitochondrial intermembrane" evidence="1">
    <location>
        <begin position="298"/>
        <end position="335"/>
    </location>
</feature>
<feature type="transmembrane region" description="Helical; Name=6" evidence="1">
    <location>
        <begin position="336"/>
        <end position="358"/>
    </location>
</feature>
<feature type="topological domain" description="Mitochondrial matrix" evidence="1">
    <location>
        <begin position="359"/>
        <end position="373"/>
    </location>
</feature>
<feature type="repeat" description="Solcar 1" evidence="1">
    <location>
        <begin position="75"/>
        <end position="166"/>
    </location>
</feature>
<feature type="repeat" description="Solcar 2" evidence="1">
    <location>
        <begin position="174"/>
        <end position="263"/>
    </location>
</feature>
<feature type="repeat" description="Solcar 3" evidence="1">
    <location>
        <begin position="276"/>
        <end position="364"/>
    </location>
</feature>
<name>YIA6_YEAST</name>